<proteinExistence type="evidence at transcript level"/>
<dbReference type="EMBL" id="U26187">
    <property type="protein sequence ID" value="AAC47001.1"/>
    <property type="molecule type" value="mRNA"/>
</dbReference>
<dbReference type="EMBL" id="JOJR01000049">
    <property type="protein sequence ID" value="RCN48248.1"/>
    <property type="molecule type" value="Genomic_DNA"/>
</dbReference>
<dbReference type="SMR" id="Q16937"/>
<dbReference type="STRING" id="29170.A0A368GXE3"/>
<dbReference type="OrthoDB" id="5853705at2759"/>
<dbReference type="Proteomes" id="UP000252519">
    <property type="component" value="Unassembled WGS sequence"/>
</dbReference>
<dbReference type="GO" id="GO:0005576">
    <property type="term" value="C:extracellular region"/>
    <property type="evidence" value="ECO:0007669"/>
    <property type="project" value="UniProtKB-SubCell"/>
</dbReference>
<dbReference type="CDD" id="cd05380">
    <property type="entry name" value="CAP_euk"/>
    <property type="match status" value="2"/>
</dbReference>
<dbReference type="Gene3D" id="3.40.33.10">
    <property type="entry name" value="CAP"/>
    <property type="match status" value="2"/>
</dbReference>
<dbReference type="InterPro" id="IPR018244">
    <property type="entry name" value="Allrgn_V5/Tpx1_CS"/>
</dbReference>
<dbReference type="InterPro" id="IPR014044">
    <property type="entry name" value="CAP_dom"/>
</dbReference>
<dbReference type="InterPro" id="IPR035940">
    <property type="entry name" value="CAP_sf"/>
</dbReference>
<dbReference type="InterPro" id="IPR001283">
    <property type="entry name" value="CRISP-related"/>
</dbReference>
<dbReference type="InterPro" id="IPR002413">
    <property type="entry name" value="V5_allergen-like"/>
</dbReference>
<dbReference type="PANTHER" id="PTHR10334">
    <property type="entry name" value="CYSTEINE-RICH SECRETORY PROTEIN-RELATED"/>
    <property type="match status" value="1"/>
</dbReference>
<dbReference type="Pfam" id="PF00188">
    <property type="entry name" value="CAP"/>
    <property type="match status" value="2"/>
</dbReference>
<dbReference type="PRINTS" id="PR00838">
    <property type="entry name" value="V5ALLERGEN"/>
</dbReference>
<dbReference type="PRINTS" id="PR00837">
    <property type="entry name" value="V5TPXLIKE"/>
</dbReference>
<dbReference type="SMART" id="SM00198">
    <property type="entry name" value="SCP"/>
    <property type="match status" value="2"/>
</dbReference>
<dbReference type="SUPFAM" id="SSF55797">
    <property type="entry name" value="PR-1-like"/>
    <property type="match status" value="2"/>
</dbReference>
<dbReference type="PROSITE" id="PS01009">
    <property type="entry name" value="CRISP_1"/>
    <property type="match status" value="1"/>
</dbReference>
<reference key="1">
    <citation type="journal article" date="1996" name="J. Biol. Chem.">
        <title>Cloning and characterization of Ancylostoma-secreted protein. A novel protein associated with the transition to parasitism by infective hookworm larvae.</title>
        <authorList>
            <person name="Hawdon J.M."/>
            <person name="Jones B.F."/>
            <person name="Hoffman D.R."/>
            <person name="Hotez P.J."/>
        </authorList>
    </citation>
    <scope>NUCLEOTIDE SEQUENCE [MRNA]</scope>
</reference>
<reference evidence="3 4" key="2">
    <citation type="submission" date="2014-10" db="EMBL/GenBank/DDBJ databases">
        <title>Draft genome of the hookworm Ancylostoma caninum.</title>
        <authorList>
            <person name="Mitreva M."/>
        </authorList>
    </citation>
    <scope>NUCLEOTIDE SEQUENCE [LARGE SCALE GENOMIC DNA]</scope>
    <source>
        <strain>Baltimore</strain>
    </source>
</reference>
<feature type="signal peptide" evidence="1">
    <location>
        <begin position="1"/>
        <end position="18"/>
    </location>
</feature>
<feature type="chain" id="PRO_0000006298" description="Ancylostoma secreted protein">
    <location>
        <begin position="19"/>
        <end position="424"/>
    </location>
</feature>
<feature type="domain" description="SCP 1">
    <location>
        <begin position="41"/>
        <end position="177"/>
    </location>
</feature>
<feature type="domain" description="SCP 2" evidence="1">
    <location>
        <begin position="242"/>
        <end position="387"/>
    </location>
</feature>
<feature type="sequence conflict" description="In Ref. 2; RCN48248." evidence="2" ref="2">
    <original>A</original>
    <variation>G</variation>
    <location>
        <position position="92"/>
    </location>
</feature>
<organism>
    <name type="scientific">Ancylostoma caninum</name>
    <name type="common">Dog hookworm</name>
    <dbReference type="NCBI Taxonomy" id="29170"/>
    <lineage>
        <taxon>Eukaryota</taxon>
        <taxon>Metazoa</taxon>
        <taxon>Ecdysozoa</taxon>
        <taxon>Nematoda</taxon>
        <taxon>Chromadorea</taxon>
        <taxon>Rhabditida</taxon>
        <taxon>Rhabditina</taxon>
        <taxon>Rhabditomorpha</taxon>
        <taxon>Strongyloidea</taxon>
        <taxon>Ancylostomatidae</taxon>
        <taxon>Ancylostomatinae</taxon>
        <taxon>Ancylostoma</taxon>
    </lineage>
</organism>
<evidence type="ECO:0000255" key="1"/>
<evidence type="ECO:0000305" key="2"/>
<evidence type="ECO:0000312" key="3">
    <source>
        <dbReference type="EMBL" id="RCN48248.1"/>
    </source>
</evidence>
<evidence type="ECO:0000312" key="4">
    <source>
        <dbReference type="Proteomes" id="UP000252519"/>
    </source>
</evidence>
<gene>
    <name type="primary">ASP</name>
    <name evidence="3" type="ORF">ANCCAN_05663</name>
</gene>
<accession>Q16937</accession>
<accession>A0A368GXE3</accession>
<comment type="function">
    <text>Associated with the transition to parasitism by infective hookworm larvae.</text>
</comment>
<comment type="subcellular location">
    <subcellularLocation>
        <location evidence="2">Secreted</location>
    </subcellularLocation>
</comment>
<comment type="similarity">
    <text evidence="2">Belongs to the CRISP family.</text>
</comment>
<name>ASP_ANCCA</name>
<sequence>MFSPVIVSVIFTIAFCDASPARDGFGCSNSGITDKDRQAFLDFHNNARRRVAKGVEDSNSGKLNPAKNMYKLSWDCAMEQQLQDAIQSCPSAFAGIQGVAQNVMSWSSSGGFPDPSVKIEQTLSGWWSGAKKNGVGPDNKYNGGGLFAFSNMVYSETTKLGCAYKVCGTKLAVSCIYNGVGYITNQPMWETGQACKTGADCSTYKNSGCEDGLCTKGPDVPETNQQCPSNTGMTDSVRDTFLSVHNEFRSSVARGLEPDALGGNAPKAAKMLKMVYDCEVEASAIRHGNKCVYQHSHGEDRPGLGENIYKTSVLKFDKNKAAKQASQLWWNELKEFGVGPSNVLTTALWNRPGMQIGHYTQMAWDTTYKLGCAVVFCNDFTFGVCQYGPGGNYMGHVIYTMGQPCSQCSPGATCSVTEGLCSAP</sequence>
<keyword id="KW-1185">Reference proteome</keyword>
<keyword id="KW-0964">Secreted</keyword>
<keyword id="KW-0732">Signal</keyword>
<protein>
    <recommendedName>
        <fullName>Ancylostoma secreted protein</fullName>
    </recommendedName>
    <alternativeName>
        <fullName evidence="3">SCP-like protein</fullName>
    </alternativeName>
</protein>